<keyword id="KW-1003">Cell membrane</keyword>
<keyword id="KW-0472">Membrane</keyword>
<keyword id="KW-1185">Reference proteome</keyword>
<keyword id="KW-0812">Transmembrane</keyword>
<keyword id="KW-1133">Transmembrane helix</keyword>
<protein>
    <recommendedName>
        <fullName evidence="1">UPF0391 membrane protein YtjA</fullName>
    </recommendedName>
</protein>
<proteinExistence type="inferred from homology"/>
<sequence>MFRWGIIFLVIALIAAALGFGGLAGTAAGAAKIVFVVGIILFLVSLFMGRKRP</sequence>
<comment type="subcellular location">
    <subcellularLocation>
        <location evidence="1">Cell membrane</location>
        <topology evidence="1">Multi-pass membrane protein</topology>
    </subcellularLocation>
</comment>
<comment type="similarity">
    <text evidence="1">Belongs to the UPF0391 family.</text>
</comment>
<comment type="sequence caution" evidence="2">
    <conflict type="erroneous initiation">
        <sequence resource="EMBL-CDS" id="AAN83879"/>
    </conflict>
</comment>
<gene>
    <name evidence="1" type="primary">ytjA</name>
    <name type="ordered locus">c5459</name>
</gene>
<reference key="1">
    <citation type="journal article" date="2002" name="Proc. Natl. Acad. Sci. U.S.A.">
        <title>Extensive mosaic structure revealed by the complete genome sequence of uropathogenic Escherichia coli.</title>
        <authorList>
            <person name="Welch R.A."/>
            <person name="Burland V."/>
            <person name="Plunkett G. III"/>
            <person name="Redford P."/>
            <person name="Roesch P."/>
            <person name="Rasko D."/>
            <person name="Buckles E.L."/>
            <person name="Liou S.-R."/>
            <person name="Boutin A."/>
            <person name="Hackett J."/>
            <person name="Stroud D."/>
            <person name="Mayhew G.F."/>
            <person name="Rose D.J."/>
            <person name="Zhou S."/>
            <person name="Schwartz D.C."/>
            <person name="Perna N.T."/>
            <person name="Mobley H.L.T."/>
            <person name="Donnenberg M.S."/>
            <person name="Blattner F.R."/>
        </authorList>
    </citation>
    <scope>NUCLEOTIDE SEQUENCE [LARGE SCALE GENOMIC DNA]</scope>
    <source>
        <strain>CFT073 / ATCC 700928 / UPEC</strain>
    </source>
</reference>
<name>YTJA_ECOL6</name>
<evidence type="ECO:0000255" key="1">
    <source>
        <dbReference type="HAMAP-Rule" id="MF_01361"/>
    </source>
</evidence>
<evidence type="ECO:0000305" key="2"/>
<dbReference type="EMBL" id="AE014075">
    <property type="protein sequence ID" value="AAN83879.1"/>
    <property type="status" value="ALT_INIT"/>
    <property type="molecule type" value="Genomic_DNA"/>
</dbReference>
<dbReference type="RefSeq" id="WP_000490275.1">
    <property type="nucleotide sequence ID" value="NZ_CP051263.1"/>
</dbReference>
<dbReference type="STRING" id="199310.c5459"/>
<dbReference type="KEGG" id="ecc:c5459"/>
<dbReference type="eggNOG" id="COG5487">
    <property type="taxonomic scope" value="Bacteria"/>
</dbReference>
<dbReference type="HOGENOM" id="CLU_187346_2_0_6"/>
<dbReference type="Proteomes" id="UP000001410">
    <property type="component" value="Chromosome"/>
</dbReference>
<dbReference type="GO" id="GO:0005886">
    <property type="term" value="C:plasma membrane"/>
    <property type="evidence" value="ECO:0007669"/>
    <property type="project" value="UniProtKB-SubCell"/>
</dbReference>
<dbReference type="HAMAP" id="MF_01361">
    <property type="entry name" value="UPF0391"/>
    <property type="match status" value="1"/>
</dbReference>
<dbReference type="InterPro" id="IPR009760">
    <property type="entry name" value="DUF1328"/>
</dbReference>
<dbReference type="NCBIfam" id="NF010229">
    <property type="entry name" value="PRK13682.1-4"/>
    <property type="match status" value="1"/>
</dbReference>
<dbReference type="NCBIfam" id="NF010230">
    <property type="entry name" value="PRK13682.1-5"/>
    <property type="match status" value="1"/>
</dbReference>
<dbReference type="Pfam" id="PF07043">
    <property type="entry name" value="DUF1328"/>
    <property type="match status" value="1"/>
</dbReference>
<dbReference type="PIRSF" id="PIRSF036466">
    <property type="entry name" value="UCP036466"/>
    <property type="match status" value="1"/>
</dbReference>
<organism>
    <name type="scientific">Escherichia coli O6:H1 (strain CFT073 / ATCC 700928 / UPEC)</name>
    <dbReference type="NCBI Taxonomy" id="199310"/>
    <lineage>
        <taxon>Bacteria</taxon>
        <taxon>Pseudomonadati</taxon>
        <taxon>Pseudomonadota</taxon>
        <taxon>Gammaproteobacteria</taxon>
        <taxon>Enterobacterales</taxon>
        <taxon>Enterobacteriaceae</taxon>
        <taxon>Escherichia</taxon>
    </lineage>
</organism>
<feature type="chain" id="PRO_0000256736" description="UPF0391 membrane protein YtjA">
    <location>
        <begin position="1"/>
        <end position="53"/>
    </location>
</feature>
<feature type="transmembrane region" description="Helical" evidence="1">
    <location>
        <begin position="4"/>
        <end position="24"/>
    </location>
</feature>
<feature type="transmembrane region" description="Helical" evidence="1">
    <location>
        <begin position="30"/>
        <end position="48"/>
    </location>
</feature>
<accession>Q8FA58</accession>